<dbReference type="EMBL" id="AJ292368">
    <property type="protein sequence ID" value="CAC18542.1"/>
    <property type="molecule type" value="mRNA"/>
</dbReference>
<dbReference type="SMR" id="Q9GP40"/>
<dbReference type="eggNOG" id="KOG3440">
    <property type="taxonomic scope" value="Eukaryota"/>
</dbReference>
<dbReference type="GO" id="GO:0005743">
    <property type="term" value="C:mitochondrial inner membrane"/>
    <property type="evidence" value="ECO:0007669"/>
    <property type="project" value="UniProtKB-SubCell"/>
</dbReference>
<dbReference type="GO" id="GO:0045275">
    <property type="term" value="C:respiratory chain complex III"/>
    <property type="evidence" value="ECO:0007669"/>
    <property type="project" value="InterPro"/>
</dbReference>
<dbReference type="GO" id="GO:0006122">
    <property type="term" value="P:mitochondrial electron transport, ubiquinol to cytochrome c"/>
    <property type="evidence" value="ECO:0007669"/>
    <property type="project" value="InterPro"/>
</dbReference>
<dbReference type="Gene3D" id="1.10.1090.10">
    <property type="entry name" value="Cytochrome b-c1 complex subunit 7"/>
    <property type="match status" value="1"/>
</dbReference>
<dbReference type="InterPro" id="IPR003197">
    <property type="entry name" value="QCR7"/>
</dbReference>
<dbReference type="InterPro" id="IPR036544">
    <property type="entry name" value="QCR7_sf"/>
</dbReference>
<dbReference type="PANTHER" id="PTHR12022:SF0">
    <property type="entry name" value="CYTOCHROME B-C1 COMPLEX SUBUNIT 7"/>
    <property type="match status" value="1"/>
</dbReference>
<dbReference type="PANTHER" id="PTHR12022">
    <property type="entry name" value="UBIQUINOL-CYTOCHROME C REDUCTASE COMPLEX 14 KD PROTEIN"/>
    <property type="match status" value="1"/>
</dbReference>
<dbReference type="Pfam" id="PF02271">
    <property type="entry name" value="UCR_14kD"/>
    <property type="match status" value="1"/>
</dbReference>
<dbReference type="SUPFAM" id="SSF81524">
    <property type="entry name" value="14 kDa protein of cytochrome bc1 complex (Ubiquinol-cytochrome c reductase)"/>
    <property type="match status" value="1"/>
</dbReference>
<feature type="chain" id="PRO_0000193527" description="Cytochrome b-c1 complex subunit 7">
    <location>
        <begin position="1"/>
        <end position="130"/>
    </location>
</feature>
<gene>
    <name type="primary">UBCRBP</name>
    <name type="synonym">UCRP</name>
</gene>
<accession>Q9GP40</accession>
<sequence length="130" mass="15667">MTTLRSAVAKVSETWKMKIAQRSFFEKTIKDFNFNTGYYNQIGLRWHDIMPRNAVVEEAFRRLPREEREDMDFRLARATLLSANKTILSKEEWTKQEEDVPYLDPYIKLIERELRNKADWDNFISPRTYP</sequence>
<reference key="1">
    <citation type="journal article" date="2000" name="J. Biol. Chem.">
        <title>mRNA trans-splicing in the human parasitic cestode Echinococcus multilocularis.</title>
        <authorList>
            <person name="Brehm K."/>
            <person name="Jensen K."/>
            <person name="Frosch M."/>
        </authorList>
    </citation>
    <scope>NUCLEOTIDE SEQUENCE [MRNA]</scope>
    <source>
        <strain>H-95</strain>
    </source>
</reference>
<organism>
    <name type="scientific">Echinococcus multilocularis</name>
    <name type="common">Fox tapeworm</name>
    <dbReference type="NCBI Taxonomy" id="6211"/>
    <lineage>
        <taxon>Eukaryota</taxon>
        <taxon>Metazoa</taxon>
        <taxon>Spiralia</taxon>
        <taxon>Lophotrochozoa</taxon>
        <taxon>Platyhelminthes</taxon>
        <taxon>Cestoda</taxon>
        <taxon>Eucestoda</taxon>
        <taxon>Cyclophyllidea</taxon>
        <taxon>Taeniidae</taxon>
        <taxon>Echinococcus</taxon>
    </lineage>
</organism>
<evidence type="ECO:0000250" key="1">
    <source>
        <dbReference type="UniProtKB" id="P00128"/>
    </source>
</evidence>
<evidence type="ECO:0000305" key="2"/>
<name>QCR7_ECHMU</name>
<protein>
    <recommendedName>
        <fullName>Cytochrome b-c1 complex subunit 7</fullName>
    </recommendedName>
    <alternativeName>
        <fullName>Complex III subunit 7</fullName>
    </alternativeName>
    <alternativeName>
        <fullName>Complex III subunit VII</fullName>
    </alternativeName>
    <alternativeName>
        <fullName>Ubiquinol-cytochrome c reductase complex 14 kDa protein</fullName>
    </alternativeName>
</protein>
<proteinExistence type="evidence at transcript level"/>
<keyword id="KW-0249">Electron transport</keyword>
<keyword id="KW-0472">Membrane</keyword>
<keyword id="KW-0496">Mitochondrion</keyword>
<keyword id="KW-0999">Mitochondrion inner membrane</keyword>
<keyword id="KW-0679">Respiratory chain</keyword>
<keyword id="KW-0813">Transport</keyword>
<comment type="function">
    <text evidence="1">Component of the ubiquinol-cytochrome c oxidoreductase, a multisubunit transmembrane complex that is part of the mitochondrial electron transport chain which drives oxidative phosphorylation. The respiratory chain contains 3 multisubunit complexes succinate dehydrogenase (complex II, CII), ubiquinol-cytochrome c oxidoreductase (cytochrome b-c1 complex, complex III, CIII) and cytochrome c oxidase (complex IV, CIV), that cooperate to transfer electrons derived from NADH and succinate to molecular oxygen, creating an electrochemical gradient over the inner membrane that drives transmembrane transport and the ATP synthase. The cytochrome b-c1 complex catalyzes electron transfer from ubiquinol to cytochrome c, linking this redox reaction to translocation of protons across the mitochondrial inner membrane, with protons being carried across the membrane as hydrogens on the quinol. In the process called Q cycle, 2 protons are consumed from the matrix, 4 protons are released into the intermembrane space and 2 electrons are passed to cytochrome c.</text>
</comment>
<comment type="subunit">
    <text evidence="1">Component of the ubiquinol-cytochrome c oxidoreductase (cytochrome b-c1 complex, complex III, CIII), a multisubunit enzyme composed of 3 respiratory subunits cytochrome b, cytochrome c1 and Rieske protein, 2 core protein subunits, and additional low-molecular weight protein subunits. The complex exists as an obligatory dimer and forms supercomplexes (SCs) in the inner mitochondrial membrane with cytochrome c oxidase (complex IV, CIV).</text>
</comment>
<comment type="subcellular location">
    <subcellularLocation>
        <location evidence="1">Mitochondrion inner membrane</location>
        <topology evidence="1">Peripheral membrane protein</topology>
        <orientation evidence="1">Matrix side</orientation>
    </subcellularLocation>
</comment>
<comment type="similarity">
    <text evidence="2">Belongs to the UQCRB/QCR7 family.</text>
</comment>